<gene>
    <name evidence="1" type="primary">lysZ</name>
    <name type="synonym">argB</name>
    <name type="ordered locus">STK_01940</name>
</gene>
<organism>
    <name type="scientific">Sulfurisphaera tokodaii (strain DSM 16993 / JCM 10545 / NBRC 100140 / 7)</name>
    <name type="common">Sulfolobus tokodaii</name>
    <dbReference type="NCBI Taxonomy" id="273063"/>
    <lineage>
        <taxon>Archaea</taxon>
        <taxon>Thermoproteota</taxon>
        <taxon>Thermoprotei</taxon>
        <taxon>Sulfolobales</taxon>
        <taxon>Sulfolobaceae</taxon>
        <taxon>Sulfurisphaera</taxon>
    </lineage>
</organism>
<feature type="chain" id="PRO_0000112705" description="[LysW]-aminoadipate/[LysW]-glutamate kinase">
    <location>
        <begin position="1"/>
        <end position="261"/>
    </location>
</feature>
<feature type="binding site" evidence="1">
    <location>
        <begin position="35"/>
        <end position="36"/>
    </location>
    <ligand>
        <name>substrate</name>
    </ligand>
</feature>
<feature type="binding site" evidence="1">
    <location>
        <position position="62"/>
    </location>
    <ligand>
        <name>substrate</name>
    </ligand>
</feature>
<feature type="binding site" evidence="1">
    <location>
        <position position="166"/>
    </location>
    <ligand>
        <name>substrate</name>
    </ligand>
</feature>
<feature type="site" description="Transition state stabilizer" evidence="1">
    <location>
        <position position="5"/>
    </location>
</feature>
<feature type="site" description="Transition state stabilizer" evidence="1">
    <location>
        <position position="223"/>
    </location>
</feature>
<name>LYSZ_SULTO</name>
<dbReference type="EC" id="2.7.2.17" evidence="1"/>
<dbReference type="EC" id="2.7.2.19" evidence="1"/>
<dbReference type="EMBL" id="BA000023">
    <property type="protein sequence ID" value="BAK54183.1"/>
    <property type="molecule type" value="Genomic_DNA"/>
</dbReference>
<dbReference type="RefSeq" id="WP_010978133.1">
    <property type="nucleotide sequence ID" value="NC_003106.2"/>
</dbReference>
<dbReference type="SMR" id="Q976J6"/>
<dbReference type="STRING" id="273063.STK_01940"/>
<dbReference type="GeneID" id="1458079"/>
<dbReference type="KEGG" id="sto:STK_01940"/>
<dbReference type="PATRIC" id="fig|273063.9.peg.238"/>
<dbReference type="eggNOG" id="arCOG00862">
    <property type="taxonomic scope" value="Archaea"/>
</dbReference>
<dbReference type="OrthoDB" id="6816at2157"/>
<dbReference type="UniPathway" id="UPA00033">
    <property type="reaction ID" value="UER00036"/>
</dbReference>
<dbReference type="UniPathway" id="UPA00068"/>
<dbReference type="Proteomes" id="UP000001015">
    <property type="component" value="Chromosome"/>
</dbReference>
<dbReference type="GO" id="GO:0005737">
    <property type="term" value="C:cytoplasm"/>
    <property type="evidence" value="ECO:0007669"/>
    <property type="project" value="UniProtKB-SubCell"/>
</dbReference>
<dbReference type="GO" id="GO:0003991">
    <property type="term" value="F:acetylglutamate kinase activity"/>
    <property type="evidence" value="ECO:0007669"/>
    <property type="project" value="TreeGrafter"/>
</dbReference>
<dbReference type="GO" id="GO:0005524">
    <property type="term" value="F:ATP binding"/>
    <property type="evidence" value="ECO:0007669"/>
    <property type="project" value="UniProtKB-KW"/>
</dbReference>
<dbReference type="GO" id="GO:0043744">
    <property type="term" value="F:N2-acetyl-L-aminoadipate kinase activity"/>
    <property type="evidence" value="ECO:0007669"/>
    <property type="project" value="RHEA"/>
</dbReference>
<dbReference type="GO" id="GO:0042450">
    <property type="term" value="P:arginine biosynthetic process via ornithine"/>
    <property type="evidence" value="ECO:0007669"/>
    <property type="project" value="UniProtKB-UniRule"/>
</dbReference>
<dbReference type="GO" id="GO:0006526">
    <property type="term" value="P:L-arginine biosynthetic process"/>
    <property type="evidence" value="ECO:0007669"/>
    <property type="project" value="UniProtKB-UniPathway"/>
</dbReference>
<dbReference type="GO" id="GO:0019878">
    <property type="term" value="P:lysine biosynthetic process via aminoadipic acid"/>
    <property type="evidence" value="ECO:0007669"/>
    <property type="project" value="UniProtKB-UniRule"/>
</dbReference>
<dbReference type="CDD" id="cd04251">
    <property type="entry name" value="AAK_NAGK-UC"/>
    <property type="match status" value="1"/>
</dbReference>
<dbReference type="Gene3D" id="3.40.1160.10">
    <property type="entry name" value="Acetylglutamate kinase-like"/>
    <property type="match status" value="1"/>
</dbReference>
<dbReference type="HAMAP" id="MF_02082">
    <property type="entry name" value="LysZ"/>
    <property type="match status" value="1"/>
</dbReference>
<dbReference type="InterPro" id="IPR036393">
    <property type="entry name" value="AceGlu_kinase-like_sf"/>
</dbReference>
<dbReference type="InterPro" id="IPR004662">
    <property type="entry name" value="AcgluKinase_fam"/>
</dbReference>
<dbReference type="InterPro" id="IPR001048">
    <property type="entry name" value="Asp/Glu/Uridylate_kinase"/>
</dbReference>
<dbReference type="InterPro" id="IPR037529">
    <property type="entry name" value="LysZ"/>
</dbReference>
<dbReference type="NCBIfam" id="TIGR00761">
    <property type="entry name" value="argB"/>
    <property type="match status" value="1"/>
</dbReference>
<dbReference type="NCBIfam" id="NF010662">
    <property type="entry name" value="PRK14058.1-4"/>
    <property type="match status" value="1"/>
</dbReference>
<dbReference type="PANTHER" id="PTHR23342">
    <property type="entry name" value="N-ACETYLGLUTAMATE SYNTHASE"/>
    <property type="match status" value="1"/>
</dbReference>
<dbReference type="PANTHER" id="PTHR23342:SF0">
    <property type="entry name" value="N-ACETYLGLUTAMATE SYNTHASE, MITOCHONDRIAL"/>
    <property type="match status" value="1"/>
</dbReference>
<dbReference type="Pfam" id="PF00696">
    <property type="entry name" value="AA_kinase"/>
    <property type="match status" value="1"/>
</dbReference>
<dbReference type="PIRSF" id="PIRSF000728">
    <property type="entry name" value="NAGK"/>
    <property type="match status" value="1"/>
</dbReference>
<dbReference type="SUPFAM" id="SSF53633">
    <property type="entry name" value="Carbamate kinase-like"/>
    <property type="match status" value="1"/>
</dbReference>
<proteinExistence type="inferred from homology"/>
<keyword id="KW-0028">Amino-acid biosynthesis</keyword>
<keyword id="KW-0055">Arginine biosynthesis</keyword>
<keyword id="KW-0067">ATP-binding</keyword>
<keyword id="KW-0963">Cytoplasm</keyword>
<keyword id="KW-0418">Kinase</keyword>
<keyword id="KW-0457">Lysine biosynthesis</keyword>
<keyword id="KW-0547">Nucleotide-binding</keyword>
<keyword id="KW-1185">Reference proteome</keyword>
<keyword id="KW-0808">Transferase</keyword>
<protein>
    <recommendedName>
        <fullName evidence="1">[LysW]-aminoadipate/[LysW]-glutamate kinase</fullName>
        <ecNumber evidence="1">2.7.2.17</ecNumber>
        <ecNumber evidence="1">2.7.2.19</ecNumber>
    </recommendedName>
</protein>
<comment type="function">
    <text evidence="1">Involved in both the arginine and lysine biosynthetic pathways. Phosphorylates the LysW-bound precursors glutamate (for arginine biosynthesis), respectively alpha-aminoadipate (for lysine biosynthesis).</text>
</comment>
<comment type="catalytic activity">
    <reaction evidence="1">
        <text>[amino-group carrier protein]-C-terminal-N-(1,4-dicarboxybutan-1-yl)-L-glutamine + ATP = [amino-group carrier protein]-C-terminal-N-(1-carboxy-5-phosphooxy-5-oxopentan-1-yl)-L-glutamine + ADP</text>
        <dbReference type="Rhea" id="RHEA:41944"/>
        <dbReference type="Rhea" id="RHEA-COMP:9694"/>
        <dbReference type="Rhea" id="RHEA-COMP:9712"/>
        <dbReference type="ChEBI" id="CHEBI:30616"/>
        <dbReference type="ChEBI" id="CHEBI:78499"/>
        <dbReference type="ChEBI" id="CHEBI:78503"/>
        <dbReference type="ChEBI" id="CHEBI:456216"/>
        <dbReference type="EC" id="2.7.2.17"/>
    </reaction>
</comment>
<comment type="catalytic activity">
    <reaction evidence="1">
        <text>[amino-group carrier protein]-C-terminal-gamma-(L-glutamyl)-L-glutamate + ATP = [amino-group carrier protein]-C-terminal-gamma-(5-phospho-L-glutamyl)-L-glutamate + ADP</text>
        <dbReference type="Rhea" id="RHEA:52632"/>
        <dbReference type="Rhea" id="RHEA-COMP:13311"/>
        <dbReference type="Rhea" id="RHEA-COMP:13313"/>
        <dbReference type="ChEBI" id="CHEBI:30616"/>
        <dbReference type="ChEBI" id="CHEBI:136714"/>
        <dbReference type="ChEBI" id="CHEBI:136717"/>
        <dbReference type="ChEBI" id="CHEBI:456216"/>
        <dbReference type="EC" id="2.7.2.19"/>
    </reaction>
</comment>
<comment type="pathway">
    <text evidence="1">Amino-acid biosynthesis; L-lysine biosynthesis via AAA pathway; L-lysine from L-alpha-aminoadipate (Thermus route): step 2/5.</text>
</comment>
<comment type="pathway">
    <text evidence="1">Amino-acid biosynthesis; L-arginine biosynthesis.</text>
</comment>
<comment type="subcellular location">
    <subcellularLocation>
        <location evidence="1">Cytoplasm</location>
    </subcellularLocation>
</comment>
<comment type="similarity">
    <text evidence="1">Belongs to the acetylglutamate kinase family. LysZ subfamily.</text>
</comment>
<sequence>MIVIKAGGRVIKNNLDGIIESLSNVGEQAIFVHGGGDQVTETSKKLGIEPVFVTSPEGIRSRYTSKEELEVFIMVMSLISRQIVSKLAYKKKVISLTGADGNSVIAERKKKIIIIDERGRKRIVDGGYTGKIKKVDSLVISDLLKSFDLLVFAPLAYDPEEKTLLNVDGDQMAFAIATAMKADTLILLTDVEGVLVDGKVINKLTSKEAKELSKRIGPGMNRKLLMAGETIENGVKKVIISSGLVQDPISNALQLRGTVIM</sequence>
<accession>Q976J6</accession>
<accession>F9VMN7</accession>
<reference key="1">
    <citation type="journal article" date="2001" name="DNA Res.">
        <title>Complete genome sequence of an aerobic thermoacidophilic Crenarchaeon, Sulfolobus tokodaii strain7.</title>
        <authorList>
            <person name="Kawarabayasi Y."/>
            <person name="Hino Y."/>
            <person name="Horikawa H."/>
            <person name="Jin-no K."/>
            <person name="Takahashi M."/>
            <person name="Sekine M."/>
            <person name="Baba S."/>
            <person name="Ankai A."/>
            <person name="Kosugi H."/>
            <person name="Hosoyama A."/>
            <person name="Fukui S."/>
            <person name="Nagai Y."/>
            <person name="Nishijima K."/>
            <person name="Otsuka R."/>
            <person name="Nakazawa H."/>
            <person name="Takamiya M."/>
            <person name="Kato Y."/>
            <person name="Yoshizawa T."/>
            <person name="Tanaka T."/>
            <person name="Kudoh Y."/>
            <person name="Yamazaki J."/>
            <person name="Kushida N."/>
            <person name="Oguchi A."/>
            <person name="Aoki K."/>
            <person name="Masuda S."/>
            <person name="Yanagii M."/>
            <person name="Nishimura M."/>
            <person name="Yamagishi A."/>
            <person name="Oshima T."/>
            <person name="Kikuchi H."/>
        </authorList>
    </citation>
    <scope>NUCLEOTIDE SEQUENCE [LARGE SCALE GENOMIC DNA]</scope>
    <source>
        <strain>DSM 16993 / JCM 10545 / NBRC 100140 / 7</strain>
    </source>
</reference>
<evidence type="ECO:0000255" key="1">
    <source>
        <dbReference type="HAMAP-Rule" id="MF_02082"/>
    </source>
</evidence>